<evidence type="ECO:0000255" key="1">
    <source>
        <dbReference type="HAMAP-Rule" id="MF_00311"/>
    </source>
</evidence>
<organism>
    <name type="scientific">Clostridium novyi (strain NT)</name>
    <dbReference type="NCBI Taxonomy" id="386415"/>
    <lineage>
        <taxon>Bacteria</taxon>
        <taxon>Bacillati</taxon>
        <taxon>Bacillota</taxon>
        <taxon>Clostridia</taxon>
        <taxon>Eubacteriales</taxon>
        <taxon>Clostridiaceae</taxon>
        <taxon>Clostridium</taxon>
    </lineage>
</organism>
<accession>A0PZC3</accession>
<proteinExistence type="inferred from homology"/>
<keyword id="KW-0066">ATP synthesis</keyword>
<keyword id="KW-0375">Hydrogen ion transport</keyword>
<keyword id="KW-0406">Ion transport</keyword>
<keyword id="KW-1185">Reference proteome</keyword>
<keyword id="KW-0813">Transport</keyword>
<dbReference type="EMBL" id="CP000382">
    <property type="protein sequence ID" value="ABK61370.1"/>
    <property type="molecule type" value="Genomic_DNA"/>
</dbReference>
<dbReference type="RefSeq" id="WP_011721732.1">
    <property type="nucleotide sequence ID" value="NC_008593.1"/>
</dbReference>
<dbReference type="SMR" id="A0PZC3"/>
<dbReference type="STRING" id="386415.NT01CX_1644"/>
<dbReference type="KEGG" id="cno:NT01CX_1644"/>
<dbReference type="eggNOG" id="COG1390">
    <property type="taxonomic scope" value="Bacteria"/>
</dbReference>
<dbReference type="HOGENOM" id="CLU_105846_0_0_9"/>
<dbReference type="Proteomes" id="UP000008220">
    <property type="component" value="Chromosome"/>
</dbReference>
<dbReference type="GO" id="GO:0033178">
    <property type="term" value="C:proton-transporting two-sector ATPase complex, catalytic domain"/>
    <property type="evidence" value="ECO:0007669"/>
    <property type="project" value="InterPro"/>
</dbReference>
<dbReference type="GO" id="GO:0005524">
    <property type="term" value="F:ATP binding"/>
    <property type="evidence" value="ECO:0007669"/>
    <property type="project" value="UniProtKB-UniRule"/>
</dbReference>
<dbReference type="GO" id="GO:0046933">
    <property type="term" value="F:proton-transporting ATP synthase activity, rotational mechanism"/>
    <property type="evidence" value="ECO:0007669"/>
    <property type="project" value="UniProtKB-UniRule"/>
</dbReference>
<dbReference type="GO" id="GO:0046961">
    <property type="term" value="F:proton-transporting ATPase activity, rotational mechanism"/>
    <property type="evidence" value="ECO:0007669"/>
    <property type="project" value="InterPro"/>
</dbReference>
<dbReference type="GO" id="GO:0042777">
    <property type="term" value="P:proton motive force-driven plasma membrane ATP synthesis"/>
    <property type="evidence" value="ECO:0007669"/>
    <property type="project" value="UniProtKB-UniRule"/>
</dbReference>
<dbReference type="Gene3D" id="3.30.2320.30">
    <property type="entry name" value="ATP synthase, E subunit, C-terminal"/>
    <property type="match status" value="1"/>
</dbReference>
<dbReference type="Gene3D" id="1.20.5.620">
    <property type="entry name" value="F1F0 ATP synthase subunit B, membrane domain"/>
    <property type="match status" value="1"/>
</dbReference>
<dbReference type="HAMAP" id="MF_00311">
    <property type="entry name" value="ATP_synth_E_arch"/>
    <property type="match status" value="1"/>
</dbReference>
<dbReference type="InterPro" id="IPR028987">
    <property type="entry name" value="ATP_synth_B-like_membr_sf"/>
</dbReference>
<dbReference type="InterPro" id="IPR038495">
    <property type="entry name" value="ATPase_E_C"/>
</dbReference>
<dbReference type="InterPro" id="IPR002842">
    <property type="entry name" value="ATPase_V1_Esu"/>
</dbReference>
<dbReference type="Pfam" id="PF01991">
    <property type="entry name" value="vATP-synt_E"/>
    <property type="match status" value="1"/>
</dbReference>
<dbReference type="SUPFAM" id="SSF81573">
    <property type="entry name" value="F1F0 ATP synthase subunit B, membrane domain"/>
    <property type="match status" value="1"/>
</dbReference>
<dbReference type="SUPFAM" id="SSF160527">
    <property type="entry name" value="V-type ATPase subunit E-like"/>
    <property type="match status" value="1"/>
</dbReference>
<comment type="function">
    <text evidence="1">Produces ATP from ADP in the presence of a proton gradient across the membrane.</text>
</comment>
<comment type="similarity">
    <text evidence="1">Belongs to the V-ATPase E subunit family.</text>
</comment>
<gene>
    <name evidence="1" type="primary">atpE</name>
    <name type="ordered locus">NT01CX_1644</name>
</gene>
<protein>
    <recommendedName>
        <fullName>V-type ATP synthase subunit E</fullName>
    </recommendedName>
    <alternativeName>
        <fullName evidence="1">V-ATPase subunit E</fullName>
    </alternativeName>
</protein>
<reference key="1">
    <citation type="journal article" date="2006" name="Nat. Biotechnol.">
        <title>The genome and transcriptomes of the anti-tumor agent Clostridium novyi-NT.</title>
        <authorList>
            <person name="Bettegowda C."/>
            <person name="Huang X."/>
            <person name="Lin J."/>
            <person name="Cheong I."/>
            <person name="Kohli M."/>
            <person name="Szabo S.A."/>
            <person name="Zhang X."/>
            <person name="Diaz L.A. Jr."/>
            <person name="Velculescu V.E."/>
            <person name="Parmigiani G."/>
            <person name="Kinzler K.W."/>
            <person name="Vogelstein B."/>
            <person name="Zhou S."/>
        </authorList>
    </citation>
    <scope>NUCLEOTIDE SEQUENCE [LARGE SCALE GENOMIC DNA]</scope>
    <source>
        <strain>NT</strain>
    </source>
</reference>
<name>VATE_CLONN</name>
<feature type="chain" id="PRO_0000322515" description="V-type ATP synthase subunit E">
    <location>
        <begin position="1"/>
        <end position="198"/>
    </location>
</feature>
<sequence>MSNITGLTNKIIEDAKVSSKEIMDDAKKKEKIIIDEKVSIAENERKLILSKAEEESKVRAGRIISNANLQVRDMKLSAKIEVLDNVFNAAVEELSRMTGGELLNFIKNTILLLDIDGDEEIIVGENEDRVTTEFINEINKELNAKGKLGKIKLSQKRIKIKGGYILAKNGIEINNTFESRVKSLRDDMEAEVAKVLFS</sequence>